<organism>
    <name type="scientific">Burkholderia mallei (strain ATCC 23344)</name>
    <dbReference type="NCBI Taxonomy" id="243160"/>
    <lineage>
        <taxon>Bacteria</taxon>
        <taxon>Pseudomonadati</taxon>
        <taxon>Pseudomonadota</taxon>
        <taxon>Betaproteobacteria</taxon>
        <taxon>Burkholderiales</taxon>
        <taxon>Burkholderiaceae</taxon>
        <taxon>Burkholderia</taxon>
        <taxon>pseudomallei group</taxon>
    </lineage>
</organism>
<proteinExistence type="inferred from homology"/>
<accession>Q62HV4</accession>
<keyword id="KW-1185">Reference proteome</keyword>
<keyword id="KW-0686">Riboflavin biosynthesis</keyword>
<keyword id="KW-0808">Transferase</keyword>
<feature type="chain" id="PRO_1000040381" description="6,7-dimethyl-8-ribityllumazine synthase">
    <location>
        <begin position="1"/>
        <end position="173"/>
    </location>
</feature>
<feature type="region of interest" description="Disordered" evidence="2">
    <location>
        <begin position="150"/>
        <end position="173"/>
    </location>
</feature>
<feature type="compositionally biased region" description="Acidic residues" evidence="2">
    <location>
        <begin position="154"/>
        <end position="173"/>
    </location>
</feature>
<feature type="active site" description="Proton donor" evidence="1">
    <location>
        <position position="90"/>
    </location>
</feature>
<feature type="binding site" evidence="1">
    <location>
        <position position="24"/>
    </location>
    <ligand>
        <name>5-amino-6-(D-ribitylamino)uracil</name>
        <dbReference type="ChEBI" id="CHEBI:15934"/>
    </ligand>
</feature>
<feature type="binding site" evidence="1">
    <location>
        <begin position="58"/>
        <end position="60"/>
    </location>
    <ligand>
        <name>5-amino-6-(D-ribitylamino)uracil</name>
        <dbReference type="ChEBI" id="CHEBI:15934"/>
    </ligand>
</feature>
<feature type="binding site" evidence="1">
    <location>
        <begin position="82"/>
        <end position="84"/>
    </location>
    <ligand>
        <name>5-amino-6-(D-ribitylamino)uracil</name>
        <dbReference type="ChEBI" id="CHEBI:15934"/>
    </ligand>
</feature>
<feature type="binding site" evidence="1">
    <location>
        <begin position="87"/>
        <end position="88"/>
    </location>
    <ligand>
        <name>(2S)-2-hydroxy-3-oxobutyl phosphate</name>
        <dbReference type="ChEBI" id="CHEBI:58830"/>
    </ligand>
</feature>
<feature type="binding site" evidence="1">
    <location>
        <position position="115"/>
    </location>
    <ligand>
        <name>5-amino-6-(D-ribitylamino)uracil</name>
        <dbReference type="ChEBI" id="CHEBI:15934"/>
    </ligand>
</feature>
<feature type="binding site" evidence="1">
    <location>
        <position position="129"/>
    </location>
    <ligand>
        <name>(2S)-2-hydroxy-3-oxobutyl phosphate</name>
        <dbReference type="ChEBI" id="CHEBI:58830"/>
    </ligand>
</feature>
<sequence>MEIGQYQPNLEGDGLRIGIVQSRFNEPVCNGLADACVEELERLGVSGEDVLLVTVPGALEIPLALQKLAESNQFDALIALGAVIRGETYHFELVSNESGAGITRIALDFNTPIANAVLTTETDEQAIARMTEKGRDAARVAVEMANLTMTLDQLSDDEEDEEDEDDEDEEERA</sequence>
<dbReference type="EC" id="2.5.1.78" evidence="1"/>
<dbReference type="EMBL" id="CP000010">
    <property type="protein sequence ID" value="AAU49952.1"/>
    <property type="molecule type" value="Genomic_DNA"/>
</dbReference>
<dbReference type="RefSeq" id="WP_004186056.1">
    <property type="nucleotide sequence ID" value="NC_006348.1"/>
</dbReference>
<dbReference type="RefSeq" id="YP_103716.1">
    <property type="nucleotide sequence ID" value="NC_006348.1"/>
</dbReference>
<dbReference type="SMR" id="Q62HV4"/>
<dbReference type="GeneID" id="93061204"/>
<dbReference type="KEGG" id="bma:BMA2146"/>
<dbReference type="PATRIC" id="fig|243160.12.peg.2216"/>
<dbReference type="eggNOG" id="COG0054">
    <property type="taxonomic scope" value="Bacteria"/>
</dbReference>
<dbReference type="HOGENOM" id="CLU_089358_1_2_4"/>
<dbReference type="UniPathway" id="UPA00275">
    <property type="reaction ID" value="UER00404"/>
</dbReference>
<dbReference type="Proteomes" id="UP000006693">
    <property type="component" value="Chromosome 1"/>
</dbReference>
<dbReference type="GO" id="GO:0005829">
    <property type="term" value="C:cytosol"/>
    <property type="evidence" value="ECO:0007669"/>
    <property type="project" value="TreeGrafter"/>
</dbReference>
<dbReference type="GO" id="GO:0009349">
    <property type="term" value="C:riboflavin synthase complex"/>
    <property type="evidence" value="ECO:0007669"/>
    <property type="project" value="InterPro"/>
</dbReference>
<dbReference type="GO" id="GO:0000906">
    <property type="term" value="F:6,7-dimethyl-8-ribityllumazine synthase activity"/>
    <property type="evidence" value="ECO:0007669"/>
    <property type="project" value="UniProtKB-UniRule"/>
</dbReference>
<dbReference type="GO" id="GO:0009231">
    <property type="term" value="P:riboflavin biosynthetic process"/>
    <property type="evidence" value="ECO:0007669"/>
    <property type="project" value="UniProtKB-UniRule"/>
</dbReference>
<dbReference type="CDD" id="cd09209">
    <property type="entry name" value="Lumazine_synthase-I"/>
    <property type="match status" value="1"/>
</dbReference>
<dbReference type="Gene3D" id="3.40.50.960">
    <property type="entry name" value="Lumazine/riboflavin synthase"/>
    <property type="match status" value="1"/>
</dbReference>
<dbReference type="HAMAP" id="MF_00178">
    <property type="entry name" value="Lumazine_synth"/>
    <property type="match status" value="1"/>
</dbReference>
<dbReference type="InterPro" id="IPR034964">
    <property type="entry name" value="LS"/>
</dbReference>
<dbReference type="InterPro" id="IPR002180">
    <property type="entry name" value="LS/RS"/>
</dbReference>
<dbReference type="InterPro" id="IPR036467">
    <property type="entry name" value="LS/RS_sf"/>
</dbReference>
<dbReference type="NCBIfam" id="TIGR00114">
    <property type="entry name" value="lumazine-synth"/>
    <property type="match status" value="1"/>
</dbReference>
<dbReference type="PANTHER" id="PTHR21058:SF0">
    <property type="entry name" value="6,7-DIMETHYL-8-RIBITYLLUMAZINE SYNTHASE"/>
    <property type="match status" value="1"/>
</dbReference>
<dbReference type="PANTHER" id="PTHR21058">
    <property type="entry name" value="6,7-DIMETHYL-8-RIBITYLLUMAZINE SYNTHASE DMRL SYNTHASE LUMAZINE SYNTHASE"/>
    <property type="match status" value="1"/>
</dbReference>
<dbReference type="Pfam" id="PF00885">
    <property type="entry name" value="DMRL_synthase"/>
    <property type="match status" value="1"/>
</dbReference>
<dbReference type="SUPFAM" id="SSF52121">
    <property type="entry name" value="Lumazine synthase"/>
    <property type="match status" value="1"/>
</dbReference>
<gene>
    <name evidence="1" type="primary">ribH</name>
    <name type="ordered locus">BMA2146</name>
</gene>
<reference key="1">
    <citation type="journal article" date="2004" name="Proc. Natl. Acad. Sci. U.S.A.">
        <title>Structural flexibility in the Burkholderia mallei genome.</title>
        <authorList>
            <person name="Nierman W.C."/>
            <person name="DeShazer D."/>
            <person name="Kim H.S."/>
            <person name="Tettelin H."/>
            <person name="Nelson K.E."/>
            <person name="Feldblyum T.V."/>
            <person name="Ulrich R.L."/>
            <person name="Ronning C.M."/>
            <person name="Brinkac L.M."/>
            <person name="Daugherty S.C."/>
            <person name="Davidsen T.D."/>
            <person name="DeBoy R.T."/>
            <person name="Dimitrov G."/>
            <person name="Dodson R.J."/>
            <person name="Durkin A.S."/>
            <person name="Gwinn M.L."/>
            <person name="Haft D.H."/>
            <person name="Khouri H.M."/>
            <person name="Kolonay J.F."/>
            <person name="Madupu R."/>
            <person name="Mohammoud Y."/>
            <person name="Nelson W.C."/>
            <person name="Radune D."/>
            <person name="Romero C.M."/>
            <person name="Sarria S."/>
            <person name="Selengut J."/>
            <person name="Shamblin C."/>
            <person name="Sullivan S.A."/>
            <person name="White O."/>
            <person name="Yu Y."/>
            <person name="Zafar N."/>
            <person name="Zhou L."/>
            <person name="Fraser C.M."/>
        </authorList>
    </citation>
    <scope>NUCLEOTIDE SEQUENCE [LARGE SCALE GENOMIC DNA]</scope>
    <source>
        <strain>ATCC 23344</strain>
    </source>
</reference>
<name>RISB_BURMA</name>
<evidence type="ECO:0000255" key="1">
    <source>
        <dbReference type="HAMAP-Rule" id="MF_00178"/>
    </source>
</evidence>
<evidence type="ECO:0000256" key="2">
    <source>
        <dbReference type="SAM" id="MobiDB-lite"/>
    </source>
</evidence>
<protein>
    <recommendedName>
        <fullName evidence="1">6,7-dimethyl-8-ribityllumazine synthase</fullName>
        <shortName evidence="1">DMRL synthase</shortName>
        <shortName evidence="1">LS</shortName>
        <shortName evidence="1">Lumazine synthase</shortName>
        <ecNumber evidence="1">2.5.1.78</ecNumber>
    </recommendedName>
</protein>
<comment type="function">
    <text evidence="1">Catalyzes the formation of 6,7-dimethyl-8-ribityllumazine by condensation of 5-amino-6-(D-ribitylamino)uracil with 3,4-dihydroxy-2-butanone 4-phosphate. This is the penultimate step in the biosynthesis of riboflavin.</text>
</comment>
<comment type="catalytic activity">
    <reaction evidence="1">
        <text>(2S)-2-hydroxy-3-oxobutyl phosphate + 5-amino-6-(D-ribitylamino)uracil = 6,7-dimethyl-8-(1-D-ribityl)lumazine + phosphate + 2 H2O + H(+)</text>
        <dbReference type="Rhea" id="RHEA:26152"/>
        <dbReference type="ChEBI" id="CHEBI:15377"/>
        <dbReference type="ChEBI" id="CHEBI:15378"/>
        <dbReference type="ChEBI" id="CHEBI:15934"/>
        <dbReference type="ChEBI" id="CHEBI:43474"/>
        <dbReference type="ChEBI" id="CHEBI:58201"/>
        <dbReference type="ChEBI" id="CHEBI:58830"/>
        <dbReference type="EC" id="2.5.1.78"/>
    </reaction>
</comment>
<comment type="pathway">
    <text evidence="1">Cofactor biosynthesis; riboflavin biosynthesis; riboflavin from 2-hydroxy-3-oxobutyl phosphate and 5-amino-6-(D-ribitylamino)uracil: step 1/2.</text>
</comment>
<comment type="similarity">
    <text evidence="1">Belongs to the DMRL synthase family.</text>
</comment>